<proteinExistence type="inferred from homology"/>
<accession>P0A5C0</accession>
<accession>A0A1R3XV27</accession>
<accession>O06301</accession>
<accession>P32723</accession>
<accession>X2BES1</accession>
<sequence length="625" mass="66831">MARAVGIDLGTTNSVVSVLEGGDPVVVANSEGSRTTPSIVAFARNGEVLVGQPAKNQAVTNVDRTVRSVKRHMGSDWSIEIDGKKYTAPEISARILMKLKRDAEAYLGEDITDAVITTPAYFNDAQRQATKDAGQIAGLNVLRIVNEPTAAALAYGLDKGEKEQRILVFDLGGGTFDVSLLEIGEGVVEVRATSGDNHLGGDDWDQRVVDWLVDKFKGTSGIDLTKDKMAMQRLREAAEKAKIELSSSQSTSINLPYITVDADKNPLFLDEQLTRAEFQRITQDLLDRTRKPFQSVIADTGISVSEIDHVVLVGGSTRMPAVTDLVKELTGGKEPNKGVNPDEVVAVGAALQAGVLKGEVKDVLLLDVTPLSLGIETKGGVMTRLIERNTTIPTKRSETFTTADDNQPSVQIQVYQGEREIAAHNKLLGSFELTGIPPAPRGIPQIEVTFDIDANGIVHVTAKDKGTGKENTIRIQEGSGLSKEDIDRMIKDAEAHAEEDRKRREEADVRNQAETLVYQTEKFVKEQREAEGGSKVPEDTLNKVDAAVAEAKAALGGSDISAIKSAMEKLGQESQALGQAIYEAAQAASQATGAAHPGGEPGGAHPGSADDVVDAEVVDDGREAK</sequence>
<comment type="function">
    <text evidence="1">Acts as a chaperone.</text>
</comment>
<comment type="induction">
    <text evidence="1">By stress conditions e.g. heat shock (By similarity).</text>
</comment>
<comment type="similarity">
    <text evidence="3">Belongs to the heat shock protein 70 family.</text>
</comment>
<protein>
    <recommendedName>
        <fullName>Chaperone protein DnaK</fullName>
    </recommendedName>
    <alternativeName>
        <fullName>HSP70</fullName>
    </alternativeName>
    <alternativeName>
        <fullName>Heat shock 70 kDa protein</fullName>
    </alternativeName>
    <alternativeName>
        <fullName>Heat shock protein 70</fullName>
    </alternativeName>
</protein>
<organism>
    <name type="scientific">Mycobacterium bovis (strain ATCC BAA-935 / AF2122/97)</name>
    <dbReference type="NCBI Taxonomy" id="233413"/>
    <lineage>
        <taxon>Bacteria</taxon>
        <taxon>Bacillati</taxon>
        <taxon>Actinomycetota</taxon>
        <taxon>Actinomycetes</taxon>
        <taxon>Mycobacteriales</taxon>
        <taxon>Mycobacteriaceae</taxon>
        <taxon>Mycobacterium</taxon>
        <taxon>Mycobacterium tuberculosis complex</taxon>
    </lineage>
</organism>
<dbReference type="EMBL" id="LT708304">
    <property type="protein sequence ID" value="SIT98914.1"/>
    <property type="molecule type" value="Genomic_DNA"/>
</dbReference>
<dbReference type="RefSeq" id="NP_854021.1">
    <property type="nucleotide sequence ID" value="NC_002945.3"/>
</dbReference>
<dbReference type="RefSeq" id="WP_003401814.1">
    <property type="nucleotide sequence ID" value="NC_002945.4"/>
</dbReference>
<dbReference type="SMR" id="P0A5C0"/>
<dbReference type="GeneID" id="45424316"/>
<dbReference type="PATRIC" id="fig|233413.5.peg.392"/>
<dbReference type="Proteomes" id="UP000001419">
    <property type="component" value="Chromosome"/>
</dbReference>
<dbReference type="GO" id="GO:0005524">
    <property type="term" value="F:ATP binding"/>
    <property type="evidence" value="ECO:0007669"/>
    <property type="project" value="UniProtKB-UniRule"/>
</dbReference>
<dbReference type="GO" id="GO:0140662">
    <property type="term" value="F:ATP-dependent protein folding chaperone"/>
    <property type="evidence" value="ECO:0007669"/>
    <property type="project" value="InterPro"/>
</dbReference>
<dbReference type="GO" id="GO:0051082">
    <property type="term" value="F:unfolded protein binding"/>
    <property type="evidence" value="ECO:0007669"/>
    <property type="project" value="InterPro"/>
</dbReference>
<dbReference type="CDD" id="cd10234">
    <property type="entry name" value="ASKHA_NBD_HSP70_DnaK-like"/>
    <property type="match status" value="1"/>
</dbReference>
<dbReference type="FunFam" id="2.60.34.10:FF:000014">
    <property type="entry name" value="Chaperone protein DnaK HSP70"/>
    <property type="match status" value="1"/>
</dbReference>
<dbReference type="FunFam" id="1.20.1270.10:FF:000001">
    <property type="entry name" value="Molecular chaperone DnaK"/>
    <property type="match status" value="1"/>
</dbReference>
<dbReference type="FunFam" id="3.30.420.40:FF:000071">
    <property type="entry name" value="Molecular chaperone DnaK"/>
    <property type="match status" value="1"/>
</dbReference>
<dbReference type="FunFam" id="3.90.640.10:FF:000003">
    <property type="entry name" value="Molecular chaperone DnaK"/>
    <property type="match status" value="1"/>
</dbReference>
<dbReference type="Gene3D" id="1.20.1270.10">
    <property type="match status" value="1"/>
</dbReference>
<dbReference type="Gene3D" id="3.30.420.40">
    <property type="match status" value="2"/>
</dbReference>
<dbReference type="Gene3D" id="3.90.640.10">
    <property type="entry name" value="Actin, Chain A, domain 4"/>
    <property type="match status" value="1"/>
</dbReference>
<dbReference type="Gene3D" id="2.60.34.10">
    <property type="entry name" value="Substrate Binding Domain Of DNAk, Chain A, domain 1"/>
    <property type="match status" value="1"/>
</dbReference>
<dbReference type="HAMAP" id="MF_00332">
    <property type="entry name" value="DnaK"/>
    <property type="match status" value="1"/>
</dbReference>
<dbReference type="InterPro" id="IPR043129">
    <property type="entry name" value="ATPase_NBD"/>
</dbReference>
<dbReference type="InterPro" id="IPR012725">
    <property type="entry name" value="Chaperone_DnaK"/>
</dbReference>
<dbReference type="InterPro" id="IPR018181">
    <property type="entry name" value="Heat_shock_70_CS"/>
</dbReference>
<dbReference type="InterPro" id="IPR029048">
    <property type="entry name" value="HSP70_C_sf"/>
</dbReference>
<dbReference type="InterPro" id="IPR029047">
    <property type="entry name" value="HSP70_peptide-bd_sf"/>
</dbReference>
<dbReference type="InterPro" id="IPR013126">
    <property type="entry name" value="Hsp_70_fam"/>
</dbReference>
<dbReference type="NCBIfam" id="NF001413">
    <property type="entry name" value="PRK00290.1"/>
    <property type="match status" value="1"/>
</dbReference>
<dbReference type="NCBIfam" id="TIGR02350">
    <property type="entry name" value="prok_dnaK"/>
    <property type="match status" value="1"/>
</dbReference>
<dbReference type="PANTHER" id="PTHR19375">
    <property type="entry name" value="HEAT SHOCK PROTEIN 70KDA"/>
    <property type="match status" value="1"/>
</dbReference>
<dbReference type="Pfam" id="PF00012">
    <property type="entry name" value="HSP70"/>
    <property type="match status" value="1"/>
</dbReference>
<dbReference type="PRINTS" id="PR00301">
    <property type="entry name" value="HEATSHOCK70"/>
</dbReference>
<dbReference type="SUPFAM" id="SSF53067">
    <property type="entry name" value="Actin-like ATPase domain"/>
    <property type="match status" value="2"/>
</dbReference>
<dbReference type="SUPFAM" id="SSF100934">
    <property type="entry name" value="Heat shock protein 70kD (HSP70), C-terminal subdomain"/>
    <property type="match status" value="1"/>
</dbReference>
<dbReference type="SUPFAM" id="SSF100920">
    <property type="entry name" value="Heat shock protein 70kD (HSP70), peptide-binding domain"/>
    <property type="match status" value="1"/>
</dbReference>
<dbReference type="PROSITE" id="PS00297">
    <property type="entry name" value="HSP70_1"/>
    <property type="match status" value="1"/>
</dbReference>
<dbReference type="PROSITE" id="PS00329">
    <property type="entry name" value="HSP70_2"/>
    <property type="match status" value="1"/>
</dbReference>
<dbReference type="PROSITE" id="PS01036">
    <property type="entry name" value="HSP70_3"/>
    <property type="match status" value="1"/>
</dbReference>
<feature type="initiator methionine" description="Removed" evidence="1">
    <location>
        <position position="1"/>
    </location>
</feature>
<feature type="chain" id="PRO_0000078500" description="Chaperone protein DnaK">
    <location>
        <begin position="2"/>
        <end position="625"/>
    </location>
</feature>
<feature type="region of interest" description="Disordered" evidence="2">
    <location>
        <begin position="586"/>
        <end position="625"/>
    </location>
</feature>
<feature type="compositionally biased region" description="Low complexity" evidence="2">
    <location>
        <begin position="586"/>
        <end position="598"/>
    </location>
</feature>
<feature type="modified residue" description="Phosphothreonine; by autocatalysis" evidence="1">
    <location>
        <position position="175"/>
    </location>
</feature>
<keyword id="KW-0067">ATP-binding</keyword>
<keyword id="KW-0143">Chaperone</keyword>
<keyword id="KW-0547">Nucleotide-binding</keyword>
<keyword id="KW-0597">Phosphoprotein</keyword>
<keyword id="KW-1185">Reference proteome</keyword>
<keyword id="KW-0346">Stress response</keyword>
<name>DNAK_MYCBO</name>
<gene>
    <name type="primary">dnaK</name>
    <name type="ordered locus">BQ2027_MB0358</name>
</gene>
<evidence type="ECO:0000250" key="1"/>
<evidence type="ECO:0000256" key="2">
    <source>
        <dbReference type="SAM" id="MobiDB-lite"/>
    </source>
</evidence>
<evidence type="ECO:0000305" key="3"/>
<reference key="1">
    <citation type="journal article" date="2003" name="Proc. Natl. Acad. Sci. U.S.A.">
        <title>The complete genome sequence of Mycobacterium bovis.</title>
        <authorList>
            <person name="Garnier T."/>
            <person name="Eiglmeier K."/>
            <person name="Camus J.-C."/>
            <person name="Medina N."/>
            <person name="Mansoor H."/>
            <person name="Pryor M."/>
            <person name="Duthoy S."/>
            <person name="Grondin S."/>
            <person name="Lacroix C."/>
            <person name="Monsempe C."/>
            <person name="Simon S."/>
            <person name="Harris B."/>
            <person name="Atkin R."/>
            <person name="Doggett J."/>
            <person name="Mayes R."/>
            <person name="Keating L."/>
            <person name="Wheeler P.R."/>
            <person name="Parkhill J."/>
            <person name="Barrell B.G."/>
            <person name="Cole S.T."/>
            <person name="Gordon S.V."/>
            <person name="Hewinson R.G."/>
        </authorList>
    </citation>
    <scope>NUCLEOTIDE SEQUENCE [LARGE SCALE GENOMIC DNA]</scope>
    <source>
        <strain>ATCC BAA-935 / AF2122/97</strain>
    </source>
</reference>
<reference key="2">
    <citation type="journal article" date="2017" name="Genome Announc.">
        <title>Updated reference genome sequence and annotation of Mycobacterium bovis AF2122/97.</title>
        <authorList>
            <person name="Malone K.M."/>
            <person name="Farrell D."/>
            <person name="Stuber T.P."/>
            <person name="Schubert O.T."/>
            <person name="Aebersold R."/>
            <person name="Robbe-Austerman S."/>
            <person name="Gordon S.V."/>
        </authorList>
    </citation>
    <scope>NUCLEOTIDE SEQUENCE [LARGE SCALE GENOMIC DNA]</scope>
    <scope>GENOME REANNOTATION</scope>
    <source>
        <strain>ATCC BAA-935 / AF2122/97</strain>
    </source>
</reference>